<proteinExistence type="evidence at protein level"/>
<protein>
    <recommendedName>
        <fullName evidence="6">Radial spoke head 10 homolog B</fullName>
    </recommendedName>
</protein>
<organism>
    <name type="scientific">Mus musculus</name>
    <name type="common">Mouse</name>
    <dbReference type="NCBI Taxonomy" id="10090"/>
    <lineage>
        <taxon>Eukaryota</taxon>
        <taxon>Metazoa</taxon>
        <taxon>Chordata</taxon>
        <taxon>Craniata</taxon>
        <taxon>Vertebrata</taxon>
        <taxon>Euteleostomi</taxon>
        <taxon>Mammalia</taxon>
        <taxon>Eutheria</taxon>
        <taxon>Euarchontoglires</taxon>
        <taxon>Glires</taxon>
        <taxon>Rodentia</taxon>
        <taxon>Myomorpha</taxon>
        <taxon>Muroidea</taxon>
        <taxon>Muridae</taxon>
        <taxon>Murinae</taxon>
        <taxon>Mus</taxon>
        <taxon>Mus</taxon>
    </lineage>
</organism>
<keyword id="KW-0966">Cell projection</keyword>
<keyword id="KW-0969">Cilium</keyword>
<keyword id="KW-0175">Coiled coil</keyword>
<keyword id="KW-0963">Cytoplasm</keyword>
<keyword id="KW-0206">Cytoskeleton</keyword>
<keyword id="KW-0282">Flagellum</keyword>
<keyword id="KW-1185">Reference proteome</keyword>
<keyword id="KW-0677">Repeat</keyword>
<evidence type="ECO:0000250" key="1">
    <source>
        <dbReference type="UniProtKB" id="P0C881"/>
    </source>
</evidence>
<evidence type="ECO:0000255" key="2"/>
<evidence type="ECO:0000256" key="3">
    <source>
        <dbReference type="SAM" id="MobiDB-lite"/>
    </source>
</evidence>
<evidence type="ECO:0000269" key="4">
    <source>
    </source>
</evidence>
<evidence type="ECO:0000269" key="5">
    <source>
    </source>
</evidence>
<evidence type="ECO:0000305" key="6"/>
<evidence type="ECO:0000305" key="7">
    <source>
    </source>
</evidence>
<evidence type="ECO:0000312" key="8">
    <source>
        <dbReference type="MGI" id="MGI:1922386"/>
    </source>
</evidence>
<evidence type="ECO:0000312" key="9">
    <source>
        <dbReference type="Proteomes" id="UP000000589"/>
    </source>
</evidence>
<name>RS10B_MOUSE</name>
<accession>E9PYQ0</accession>
<reference evidence="9" key="1">
    <citation type="journal article" date="2009" name="PLoS Biol.">
        <title>Lineage-specific biology revealed by a finished genome assembly of the mouse.</title>
        <authorList>
            <person name="Church D.M."/>
            <person name="Goodstadt L."/>
            <person name="Hillier L.W."/>
            <person name="Zody M.C."/>
            <person name="Goldstein S."/>
            <person name="She X."/>
            <person name="Bult C.J."/>
            <person name="Agarwala R."/>
            <person name="Cherry J.L."/>
            <person name="DiCuccio M."/>
            <person name="Hlavina W."/>
            <person name="Kapustin Y."/>
            <person name="Meric P."/>
            <person name="Maglott D."/>
            <person name="Birtle Z."/>
            <person name="Marques A.C."/>
            <person name="Graves T."/>
            <person name="Zhou S."/>
            <person name="Teague B."/>
            <person name="Potamousis K."/>
            <person name="Churas C."/>
            <person name="Place M."/>
            <person name="Herschleb J."/>
            <person name="Runnheim R."/>
            <person name="Forrest D."/>
            <person name="Amos-Landgraf J."/>
            <person name="Schwartz D.C."/>
            <person name="Cheng Z."/>
            <person name="Lindblad-Toh K."/>
            <person name="Eichler E.E."/>
            <person name="Ponting C.P."/>
        </authorList>
    </citation>
    <scope>NUCLEOTIDE SEQUENCE [LARGE SCALE GENOMIC DNA]</scope>
    <source>
        <strain>C57BL/6J</strain>
    </source>
</reference>
<reference key="2">
    <citation type="journal article" date="2018" name="J. Cell Sci.">
        <title>RSPH6A is required for sperm flagellum formation and male fertility in mice.</title>
        <authorList>
            <person name="Abbasi F."/>
            <person name="Miyata H."/>
            <person name="Shimada K."/>
            <person name="Morohoshi A."/>
            <person name="Nozawa K."/>
            <person name="Matsumura T."/>
            <person name="Xu Z."/>
            <person name="Pratiwi P."/>
            <person name="Ikawa M."/>
        </authorList>
    </citation>
    <scope>INTERACTION WITH RSPH6A</scope>
</reference>
<reference key="3">
    <citation type="journal article" date="2021" name="Proc. Natl. Acad. Sci. U.S.A.">
        <title>Distinct architecture and composition of mouse axonemal radial spoke head revealed by cryo-EM.</title>
        <authorList>
            <person name="Zheng W."/>
            <person name="Li F."/>
            <person name="Ding Z."/>
            <person name="Liu H."/>
            <person name="Zhu L."/>
            <person name="Xu C."/>
            <person name="Li J."/>
            <person name="Gao Q."/>
            <person name="Wang Y."/>
            <person name="Fu Z."/>
            <person name="Peng C."/>
            <person name="Yan X."/>
            <person name="Zhu X."/>
            <person name="Cong Y."/>
        </authorList>
    </citation>
    <scope>FUNCTION</scope>
    <scope>SUBUNIT</scope>
    <scope>SUBCELLULAR LOCATION</scope>
    <scope>TISSUE SPECIFICITY</scope>
</reference>
<gene>
    <name evidence="8" type="primary">Rsph10b</name>
    <name evidence="8" type="synonym">Rsph10b2</name>
</gene>
<comment type="function">
    <text evidence="5 7">May function as part of the axonemal radial spoke complex 3 (RS3) (Probable). Radial spoke complexes are important for ciliary motility (PubMed:34871179).</text>
</comment>
<comment type="subunit">
    <text evidence="4 5">Interacts with RSPH6A (PubMed:30185526). Does not appear to be part of the axonemal radial spoke complexes 1 or 2 (PubMed:34871179).</text>
</comment>
<comment type="subcellular location">
    <subcellularLocation>
        <location evidence="5">Cytoplasm</location>
        <location evidence="5">Cytoskeleton</location>
        <location evidence="5">Cilium axoneme</location>
    </subcellularLocation>
    <subcellularLocation>
        <location evidence="1">Cell projection</location>
        <location evidence="1">Cilium</location>
    </subcellularLocation>
    <subcellularLocation>
        <location evidence="1">Cell projection</location>
        <location evidence="1">Cilium</location>
        <location evidence="1">Flagellum</location>
    </subcellularLocation>
</comment>
<comment type="tissue specificity">
    <text evidence="5">Expressed in ependymal cells (at protein level).</text>
</comment>
<sequence>MVKEKKKADKKGDKSARSPSSISDNPEASKQDSNASKQEVAPSAVVPVVETPLKQAPKRDSVQMEQSEEETQYEEPILTKLIVESYEGEKVRGLYEGEGFAVFQGGNTYHGMFSEGLMHGQGTYIWADGLKYEGDFVKNIPMNHGVYTWPDGSTYEGEVTNGMRNGFGMFKCGTQPVSYIGHWCHGKRHGKGSIYYNQEGTSWYEGDWVYNIKKGWGIRCYKSGNIYEGQWENNMRHGEGRMRWLTTNEEYTGHWEKGIQNGFGTHTWFLKRIPNSQYPLRNEYIGEFVNGFRHGQGKFYYASGAMYEGEWASNKKQGRGRMTFKNGHVYEGLFSNDHIAQFFETEMDYSQSLDRWSDASQRSRQPRGSSVSAVREPETLRKLDGSESRSVLGTSIELDLTLLLDMYPEESQEEEKKQVEYAVLRNITELRRIYCFYSGLGCDHSLDNTFLMTKLHFWRFLKDCRFHHHNITLADMDRVLSVYNGIPIEEIHSPFRTILLRTFLNYLLQLAYYIHHKEFQNRSPSLFLCFTKLMSENIHPHACQVKGHLFSEQQRTLYSMNYIDKCWEIYTAYCRPNEAPPYELTMKMRYFLWMLKDFRMINKDLTATKFMTVIAEDNPFVYDGTDSNFELELVFLEFFEALLCFSLCCMFDQMTRSYLKVPYDDITTNRYGSTQTILNQSIHRSPSAITSHDSEVHFSSTKSSLDKIGALPDGKIRQSEPKLKKSLSEDKVSKMNFKTQGRGLVFMSPQGEKYEKPKDEQKEKLNIWVNNLYVFFVSVLFSAYKREEMLKEKVKENQLQEAELAQQRQIENEELEARLNILREEEARKQDFELDITVLKEPSEIPASQPLTPSPPKEDLASIQTSKASPGKKKKK</sequence>
<dbReference type="EMBL" id="AC121917">
    <property type="status" value="NOT_ANNOTATED_CDS"/>
    <property type="molecule type" value="Genomic_DNA"/>
</dbReference>
<dbReference type="SMR" id="E9PYQ0"/>
<dbReference type="FunCoup" id="E9PYQ0">
    <property type="interactions" value="6"/>
</dbReference>
<dbReference type="STRING" id="10090.ENSMUSP00000132687"/>
<dbReference type="iPTMnet" id="E9PYQ0"/>
<dbReference type="PhosphoSitePlus" id="E9PYQ0"/>
<dbReference type="PaxDb" id="10090-ENSMUSP00000132687"/>
<dbReference type="ProteomicsDB" id="313990"/>
<dbReference type="Ensembl" id="ENSMUST00000166847.8">
    <property type="protein sequence ID" value="ENSMUSP00000132687.2"/>
    <property type="gene ID" value="ENSMUSG00000075569.11"/>
</dbReference>
<dbReference type="AGR" id="MGI:1922386"/>
<dbReference type="MGI" id="MGI:1922386">
    <property type="gene designation" value="Rsph10b"/>
</dbReference>
<dbReference type="VEuPathDB" id="HostDB:ENSMUSG00000075569"/>
<dbReference type="eggNOG" id="KOG0231">
    <property type="taxonomic scope" value="Eukaryota"/>
</dbReference>
<dbReference type="GeneTree" id="ENSGT00940000159899"/>
<dbReference type="HOGENOM" id="CLU_012108_1_0_1"/>
<dbReference type="InParanoid" id="E9PYQ0"/>
<dbReference type="OMA" id="PNACHVK"/>
<dbReference type="OrthoDB" id="294378at2759"/>
<dbReference type="PhylomeDB" id="E9PYQ0"/>
<dbReference type="TreeFam" id="TF328649"/>
<dbReference type="PRO" id="PR:E9PYQ0"/>
<dbReference type="Proteomes" id="UP000000589">
    <property type="component" value="Chromosome 5"/>
</dbReference>
<dbReference type="RNAct" id="E9PYQ0">
    <property type="molecule type" value="protein"/>
</dbReference>
<dbReference type="Bgee" id="ENSMUSG00000075569">
    <property type="expression patterns" value="Expressed in lens of camera-type eye and 88 other cell types or tissues"/>
</dbReference>
<dbReference type="ExpressionAtlas" id="E9PYQ0">
    <property type="expression patterns" value="baseline and differential"/>
</dbReference>
<dbReference type="GO" id="GO:0097729">
    <property type="term" value="C:9+2 motile cilium"/>
    <property type="evidence" value="ECO:0000314"/>
    <property type="project" value="UniProtKB"/>
</dbReference>
<dbReference type="GO" id="GO:0005930">
    <property type="term" value="C:axoneme"/>
    <property type="evidence" value="ECO:0000314"/>
    <property type="project" value="MGI"/>
</dbReference>
<dbReference type="GO" id="GO:0036126">
    <property type="term" value="C:sperm flagellum"/>
    <property type="evidence" value="ECO:0000250"/>
    <property type="project" value="UniProtKB"/>
</dbReference>
<dbReference type="Gene3D" id="2.20.110.10">
    <property type="entry name" value="Histone H3 K4-specific methyltransferase SET7/9 N-terminal domain"/>
    <property type="match status" value="3"/>
</dbReference>
<dbReference type="InterPro" id="IPR003409">
    <property type="entry name" value="MORN"/>
</dbReference>
<dbReference type="PANTHER" id="PTHR46613">
    <property type="entry name" value="RADIAL SPOKE HEAD 10 HOMOLOG B-RELATED"/>
    <property type="match status" value="1"/>
</dbReference>
<dbReference type="PANTHER" id="PTHR46613:SF1">
    <property type="entry name" value="RADIAL SPOKE HEAD 10 HOMOLOG B-RELATED"/>
    <property type="match status" value="1"/>
</dbReference>
<dbReference type="Pfam" id="PF02493">
    <property type="entry name" value="MORN"/>
    <property type="match status" value="10"/>
</dbReference>
<dbReference type="SMART" id="SM00698">
    <property type="entry name" value="MORN"/>
    <property type="match status" value="9"/>
</dbReference>
<dbReference type="SUPFAM" id="SSF82185">
    <property type="entry name" value="Histone H3 K4-specific methyltransferase SET7/9 N-terminal domain"/>
    <property type="match status" value="3"/>
</dbReference>
<feature type="chain" id="PRO_0000449425" description="Radial spoke head 10 homolog B">
    <location>
        <begin position="1"/>
        <end position="876"/>
    </location>
</feature>
<feature type="repeat" description="MORN 1" evidence="2">
    <location>
        <begin position="86"/>
        <end position="108"/>
    </location>
</feature>
<feature type="repeat" description="MORN 2" evidence="2">
    <location>
        <begin position="109"/>
        <end position="129"/>
    </location>
</feature>
<feature type="repeat" description="MORN 3" evidence="2">
    <location>
        <begin position="132"/>
        <end position="154"/>
    </location>
</feature>
<feature type="repeat" description="MORN 4" evidence="2">
    <location>
        <begin position="155"/>
        <end position="172"/>
    </location>
</feature>
<feature type="repeat" description="MORN 5" evidence="2">
    <location>
        <begin position="179"/>
        <end position="196"/>
    </location>
</feature>
<feature type="repeat" description="MORN 6" evidence="2">
    <location>
        <begin position="204"/>
        <end position="225"/>
    </location>
</feature>
<feature type="repeat" description="MORN 7" evidence="2">
    <location>
        <begin position="227"/>
        <end position="244"/>
    </location>
</feature>
<feature type="repeat" description="MORN 8" evidence="2">
    <location>
        <begin position="251"/>
        <end position="268"/>
    </location>
</feature>
<feature type="repeat" description="MORN 9" evidence="2">
    <location>
        <begin position="284"/>
        <end position="305"/>
    </location>
</feature>
<feature type="repeat" description="MORN 10" evidence="2">
    <location>
        <begin position="307"/>
        <end position="328"/>
    </location>
</feature>
<feature type="region of interest" description="Disordered" evidence="3">
    <location>
        <begin position="1"/>
        <end position="71"/>
    </location>
</feature>
<feature type="region of interest" description="Disordered" evidence="3">
    <location>
        <begin position="356"/>
        <end position="386"/>
    </location>
</feature>
<feature type="region of interest" description="Disordered" evidence="3">
    <location>
        <begin position="839"/>
        <end position="876"/>
    </location>
</feature>
<feature type="coiled-coil region" evidence="2">
    <location>
        <begin position="790"/>
        <end position="832"/>
    </location>
</feature>
<feature type="compositionally biased region" description="Basic and acidic residues" evidence="3">
    <location>
        <begin position="1"/>
        <end position="16"/>
    </location>
</feature>
<feature type="compositionally biased region" description="Polar residues" evidence="3">
    <location>
        <begin position="17"/>
        <end position="37"/>
    </location>
</feature>
<feature type="compositionally biased region" description="Low complexity" evidence="3">
    <location>
        <begin position="39"/>
        <end position="50"/>
    </location>
</feature>
<feature type="compositionally biased region" description="Polar residues" evidence="3">
    <location>
        <begin position="356"/>
        <end position="372"/>
    </location>
</feature>
<feature type="compositionally biased region" description="Basic and acidic residues" evidence="3">
    <location>
        <begin position="375"/>
        <end position="386"/>
    </location>
</feature>